<name>PHS_SULAC</name>
<sequence length="91" mass="10880">MKLDENEIKRRLGEIEGWSYENNKLKKTFKFKNFYESVEFVRKIQPIADEMDHHPDLCVYYNRVVLELSTHSEGGVTEKDFELAKKINKIQ</sequence>
<feature type="chain" id="PRO_0000063110" description="Putative pterin-4-alpha-carbinolamine dehydratase">
    <location>
        <begin position="1"/>
        <end position="91"/>
    </location>
</feature>
<comment type="catalytic activity">
    <reaction evidence="1">
        <text>(4aS,6R)-4a-hydroxy-L-erythro-5,6,7,8-tetrahydrobiopterin = (6R)-L-erythro-6,7-dihydrobiopterin + H2O</text>
        <dbReference type="Rhea" id="RHEA:11920"/>
        <dbReference type="ChEBI" id="CHEBI:15377"/>
        <dbReference type="ChEBI" id="CHEBI:15642"/>
        <dbReference type="ChEBI" id="CHEBI:43120"/>
        <dbReference type="EC" id="4.2.1.96"/>
    </reaction>
</comment>
<comment type="similarity">
    <text evidence="1">Belongs to the pterin-4-alpha-carbinolamine dehydratase family.</text>
</comment>
<gene>
    <name type="ordered locus">Saci_2299</name>
</gene>
<protein>
    <recommendedName>
        <fullName evidence="1">Putative pterin-4-alpha-carbinolamine dehydratase</fullName>
        <shortName evidence="1">PHS</shortName>
        <ecNumber evidence="1">4.2.1.96</ecNumber>
    </recommendedName>
    <alternativeName>
        <fullName evidence="1">4-alpha-hydroxy-tetrahydropterin dehydratase</fullName>
    </alternativeName>
    <alternativeName>
        <fullName evidence="1">Pterin carbinolamine dehydratase</fullName>
        <shortName evidence="1">PCD</shortName>
    </alternativeName>
</protein>
<reference key="1">
    <citation type="journal article" date="2005" name="J. Bacteriol.">
        <title>The genome of Sulfolobus acidocaldarius, a model organism of the Crenarchaeota.</title>
        <authorList>
            <person name="Chen L."/>
            <person name="Bruegger K."/>
            <person name="Skovgaard M."/>
            <person name="Redder P."/>
            <person name="She Q."/>
            <person name="Torarinsson E."/>
            <person name="Greve B."/>
            <person name="Awayez M."/>
            <person name="Zibat A."/>
            <person name="Klenk H.-P."/>
            <person name="Garrett R.A."/>
        </authorList>
    </citation>
    <scope>NUCLEOTIDE SEQUENCE [LARGE SCALE GENOMIC DNA]</scope>
    <source>
        <strain>ATCC 33909 / DSM 639 / JCM 8929 / NBRC 15157 / NCIMB 11770</strain>
    </source>
</reference>
<evidence type="ECO:0000255" key="1">
    <source>
        <dbReference type="HAMAP-Rule" id="MF_00434"/>
    </source>
</evidence>
<proteinExistence type="inferred from homology"/>
<keyword id="KW-0456">Lyase</keyword>
<keyword id="KW-1185">Reference proteome</keyword>
<dbReference type="EC" id="4.2.1.96" evidence="1"/>
<dbReference type="EMBL" id="CP000077">
    <property type="protein sequence ID" value="AAY81585.1"/>
    <property type="molecule type" value="Genomic_DNA"/>
</dbReference>
<dbReference type="RefSeq" id="WP_011279087.1">
    <property type="nucleotide sequence ID" value="NC_007181.1"/>
</dbReference>
<dbReference type="SMR" id="Q4J6J6"/>
<dbReference type="STRING" id="330779.Saci_2299"/>
<dbReference type="GeneID" id="14552812"/>
<dbReference type="KEGG" id="sai:Saci_2299"/>
<dbReference type="PATRIC" id="fig|330779.12.peg.2308"/>
<dbReference type="eggNOG" id="arCOG02939">
    <property type="taxonomic scope" value="Archaea"/>
</dbReference>
<dbReference type="HOGENOM" id="CLU_081974_4_5_2"/>
<dbReference type="Proteomes" id="UP000001018">
    <property type="component" value="Chromosome"/>
</dbReference>
<dbReference type="GO" id="GO:0008124">
    <property type="term" value="F:4-alpha-hydroxytetrahydrobiopterin dehydratase activity"/>
    <property type="evidence" value="ECO:0007669"/>
    <property type="project" value="UniProtKB-UniRule"/>
</dbReference>
<dbReference type="GO" id="GO:0006729">
    <property type="term" value="P:tetrahydrobiopterin biosynthetic process"/>
    <property type="evidence" value="ECO:0007669"/>
    <property type="project" value="InterPro"/>
</dbReference>
<dbReference type="CDD" id="cd00488">
    <property type="entry name" value="PCD_DCoH"/>
    <property type="match status" value="1"/>
</dbReference>
<dbReference type="Gene3D" id="3.30.1360.20">
    <property type="entry name" value="Transcriptional coactivator/pterin dehydratase"/>
    <property type="match status" value="1"/>
</dbReference>
<dbReference type="HAMAP" id="MF_00434">
    <property type="entry name" value="Pterin_4_alpha"/>
    <property type="match status" value="1"/>
</dbReference>
<dbReference type="InterPro" id="IPR036428">
    <property type="entry name" value="PCD_sf"/>
</dbReference>
<dbReference type="InterPro" id="IPR001533">
    <property type="entry name" value="Pterin_deHydtase"/>
</dbReference>
<dbReference type="NCBIfam" id="NF002017">
    <property type="entry name" value="PRK00823.1-2"/>
    <property type="match status" value="1"/>
</dbReference>
<dbReference type="PANTHER" id="PTHR12599">
    <property type="entry name" value="PTERIN-4-ALPHA-CARBINOLAMINE DEHYDRATASE"/>
    <property type="match status" value="1"/>
</dbReference>
<dbReference type="PANTHER" id="PTHR12599:SF0">
    <property type="entry name" value="PTERIN-4-ALPHA-CARBINOLAMINE DEHYDRATASE"/>
    <property type="match status" value="1"/>
</dbReference>
<dbReference type="Pfam" id="PF01329">
    <property type="entry name" value="Pterin_4a"/>
    <property type="match status" value="1"/>
</dbReference>
<dbReference type="SUPFAM" id="SSF55248">
    <property type="entry name" value="PCD-like"/>
    <property type="match status" value="1"/>
</dbReference>
<accession>Q4J6J6</accession>
<organism>
    <name type="scientific">Sulfolobus acidocaldarius (strain ATCC 33909 / DSM 639 / JCM 8929 / NBRC 15157 / NCIMB 11770)</name>
    <dbReference type="NCBI Taxonomy" id="330779"/>
    <lineage>
        <taxon>Archaea</taxon>
        <taxon>Thermoproteota</taxon>
        <taxon>Thermoprotei</taxon>
        <taxon>Sulfolobales</taxon>
        <taxon>Sulfolobaceae</taxon>
        <taxon>Sulfolobus</taxon>
    </lineage>
</organism>